<comment type="function">
    <text evidence="1">Excises ethenocytosine and uracil, which can arise by alkylation or deamination of cytosine, respectively, from the corresponding mispairs with guanine in ds-DNA. It is capable of hydrolyzing the carbon-nitrogen bond between the sugar-phosphate backbone of the DNA and the mispaired base. The complementary strand guanine functions in substrate recognition. Required for DNA damage lesion repair in stationary-phase cells.</text>
</comment>
<comment type="catalytic activity">
    <reaction evidence="1">
        <text>Specifically hydrolyzes mismatched double-stranded DNA and polynucleotides, releasing free uracil.</text>
        <dbReference type="EC" id="3.2.2.28"/>
    </reaction>
</comment>
<comment type="subunit">
    <text evidence="1">Binds DNA as a monomer.</text>
</comment>
<comment type="subcellular location">
    <subcellularLocation>
        <location evidence="1">Cytoplasm</location>
    </subcellularLocation>
</comment>
<comment type="similarity">
    <text evidence="1">Belongs to the uracil-DNA glycosylase (UDG) superfamily. TDG/mug family.</text>
</comment>
<name>MUG_SALEP</name>
<accession>B5QZ48</accession>
<evidence type="ECO:0000255" key="1">
    <source>
        <dbReference type="HAMAP-Rule" id="MF_01956"/>
    </source>
</evidence>
<sequence length="168" mass="18650">MVKDILAPGLRVVFCGINPGLSSANTGFPFAHPANRFWKVIHLAGFTDRQLKPEEAEKLLDFRCGVTKLVDRPTVQATEVKLHELRSGGRNLIEKIEDYQPAALAVLGKQAFEQGFSQRGIAWGKQKIAIGATMVWVLPNPSGLNRIKTEKLVEAYRELDQALIMRGL</sequence>
<organism>
    <name type="scientific">Salmonella enteritidis PT4 (strain P125109)</name>
    <dbReference type="NCBI Taxonomy" id="550537"/>
    <lineage>
        <taxon>Bacteria</taxon>
        <taxon>Pseudomonadati</taxon>
        <taxon>Pseudomonadota</taxon>
        <taxon>Gammaproteobacteria</taxon>
        <taxon>Enterobacterales</taxon>
        <taxon>Enterobacteriaceae</taxon>
        <taxon>Salmonella</taxon>
    </lineage>
</organism>
<protein>
    <recommendedName>
        <fullName evidence="1">G/U mismatch-specific DNA glycosylase</fullName>
        <ecNumber evidence="1">3.2.2.28</ecNumber>
    </recommendedName>
    <alternativeName>
        <fullName evidence="1">Double-strand-specific uracil glycosylase</fullName>
    </alternativeName>
    <alternativeName>
        <fullName evidence="1">Mismatch-specific uracil DNA-glycosylase</fullName>
        <shortName evidence="1">MUG</shortName>
    </alternativeName>
</protein>
<proteinExistence type="inferred from homology"/>
<feature type="chain" id="PRO_1000188964" description="G/U mismatch-specific DNA glycosylase">
    <location>
        <begin position="1"/>
        <end position="168"/>
    </location>
</feature>
<reference key="1">
    <citation type="journal article" date="2008" name="Genome Res.">
        <title>Comparative genome analysis of Salmonella enteritidis PT4 and Salmonella gallinarum 287/91 provides insights into evolutionary and host adaptation pathways.</title>
        <authorList>
            <person name="Thomson N.R."/>
            <person name="Clayton D.J."/>
            <person name="Windhorst D."/>
            <person name="Vernikos G."/>
            <person name="Davidson S."/>
            <person name="Churcher C."/>
            <person name="Quail M.A."/>
            <person name="Stevens M."/>
            <person name="Jones M.A."/>
            <person name="Watson M."/>
            <person name="Barron A."/>
            <person name="Layton A."/>
            <person name="Pickard D."/>
            <person name="Kingsley R.A."/>
            <person name="Bignell A."/>
            <person name="Clark L."/>
            <person name="Harris B."/>
            <person name="Ormond D."/>
            <person name="Abdellah Z."/>
            <person name="Brooks K."/>
            <person name="Cherevach I."/>
            <person name="Chillingworth T."/>
            <person name="Woodward J."/>
            <person name="Norberczak H."/>
            <person name="Lord A."/>
            <person name="Arrowsmith C."/>
            <person name="Jagels K."/>
            <person name="Moule S."/>
            <person name="Mungall K."/>
            <person name="Saunders M."/>
            <person name="Whitehead S."/>
            <person name="Chabalgoity J.A."/>
            <person name="Maskell D."/>
            <person name="Humphreys T."/>
            <person name="Roberts M."/>
            <person name="Barrow P.A."/>
            <person name="Dougan G."/>
            <person name="Parkhill J."/>
        </authorList>
    </citation>
    <scope>NUCLEOTIDE SEQUENCE [LARGE SCALE GENOMIC DNA]</scope>
    <source>
        <strain>P125109</strain>
    </source>
</reference>
<gene>
    <name evidence="1" type="primary">mug</name>
    <name type="ordered locus">SEN3055</name>
</gene>
<dbReference type="EC" id="3.2.2.28" evidence="1"/>
<dbReference type="EMBL" id="AM933172">
    <property type="protein sequence ID" value="CAR34631.1"/>
    <property type="molecule type" value="Genomic_DNA"/>
</dbReference>
<dbReference type="RefSeq" id="WP_000237776.1">
    <property type="nucleotide sequence ID" value="NC_011294.1"/>
</dbReference>
<dbReference type="SMR" id="B5QZ48"/>
<dbReference type="KEGG" id="set:SEN3055"/>
<dbReference type="HOGENOM" id="CLU_042829_3_1_6"/>
<dbReference type="Proteomes" id="UP000000613">
    <property type="component" value="Chromosome"/>
</dbReference>
<dbReference type="GO" id="GO:0005737">
    <property type="term" value="C:cytoplasm"/>
    <property type="evidence" value="ECO:0007669"/>
    <property type="project" value="UniProtKB-SubCell"/>
</dbReference>
<dbReference type="GO" id="GO:0003677">
    <property type="term" value="F:DNA binding"/>
    <property type="evidence" value="ECO:0007669"/>
    <property type="project" value="UniProtKB-KW"/>
</dbReference>
<dbReference type="GO" id="GO:0008263">
    <property type="term" value="F:pyrimidine-specific mismatch base pair DNA N-glycosylase activity"/>
    <property type="evidence" value="ECO:0007669"/>
    <property type="project" value="UniProtKB-UniRule"/>
</dbReference>
<dbReference type="GO" id="GO:0004844">
    <property type="term" value="F:uracil DNA N-glycosylase activity"/>
    <property type="evidence" value="ECO:0007669"/>
    <property type="project" value="TreeGrafter"/>
</dbReference>
<dbReference type="GO" id="GO:0006285">
    <property type="term" value="P:base-excision repair, AP site formation"/>
    <property type="evidence" value="ECO:0007669"/>
    <property type="project" value="UniProtKB-UniRule"/>
</dbReference>
<dbReference type="CDD" id="cd10028">
    <property type="entry name" value="UDG-F2_TDG_MUG"/>
    <property type="match status" value="1"/>
</dbReference>
<dbReference type="Gene3D" id="3.40.470.10">
    <property type="entry name" value="Uracil-DNA glycosylase-like domain"/>
    <property type="match status" value="1"/>
</dbReference>
<dbReference type="HAMAP" id="MF_01956">
    <property type="entry name" value="MUG"/>
    <property type="match status" value="1"/>
</dbReference>
<dbReference type="InterPro" id="IPR015637">
    <property type="entry name" value="MUG/TDG"/>
</dbReference>
<dbReference type="InterPro" id="IPR023502">
    <property type="entry name" value="MUG_bact"/>
</dbReference>
<dbReference type="InterPro" id="IPR005122">
    <property type="entry name" value="Uracil-DNA_glycosylase-like"/>
</dbReference>
<dbReference type="InterPro" id="IPR036895">
    <property type="entry name" value="Uracil-DNA_glycosylase-like_sf"/>
</dbReference>
<dbReference type="NCBIfam" id="NF007570">
    <property type="entry name" value="PRK10201.1"/>
    <property type="match status" value="1"/>
</dbReference>
<dbReference type="PANTHER" id="PTHR12159">
    <property type="entry name" value="G/T AND G/U MISMATCH-SPECIFIC DNA GLYCOSYLASE"/>
    <property type="match status" value="1"/>
</dbReference>
<dbReference type="PANTHER" id="PTHR12159:SF9">
    <property type="entry name" value="G_T MISMATCH-SPECIFIC THYMINE DNA GLYCOSYLASE"/>
    <property type="match status" value="1"/>
</dbReference>
<dbReference type="Pfam" id="PF03167">
    <property type="entry name" value="UDG"/>
    <property type="match status" value="1"/>
</dbReference>
<dbReference type="SUPFAM" id="SSF52141">
    <property type="entry name" value="Uracil-DNA glycosylase-like"/>
    <property type="match status" value="1"/>
</dbReference>
<keyword id="KW-0963">Cytoplasm</keyword>
<keyword id="KW-0227">DNA damage</keyword>
<keyword id="KW-0228">DNA excision</keyword>
<keyword id="KW-0234">DNA repair</keyword>
<keyword id="KW-0238">DNA-binding</keyword>
<keyword id="KW-0378">Hydrolase</keyword>